<organism>
    <name type="scientific">Pseudoalteromonas atlantica (strain T6c / ATCC BAA-1087)</name>
    <dbReference type="NCBI Taxonomy" id="3042615"/>
    <lineage>
        <taxon>Bacteria</taxon>
        <taxon>Pseudomonadati</taxon>
        <taxon>Pseudomonadota</taxon>
        <taxon>Gammaproteobacteria</taxon>
        <taxon>Alteromonadales</taxon>
        <taxon>Alteromonadaceae</taxon>
        <taxon>Paraglaciecola</taxon>
    </lineage>
</organism>
<gene>
    <name evidence="1" type="primary">gmhA</name>
    <name type="ordered locus">Patl_3695</name>
</gene>
<comment type="function">
    <text evidence="1">Catalyzes the isomerization of sedoheptulose 7-phosphate in D-glycero-D-manno-heptose 7-phosphate.</text>
</comment>
<comment type="catalytic activity">
    <reaction evidence="1">
        <text>2 D-sedoheptulose 7-phosphate = D-glycero-alpha-D-manno-heptose 7-phosphate + D-glycero-beta-D-manno-heptose 7-phosphate</text>
        <dbReference type="Rhea" id="RHEA:27489"/>
        <dbReference type="ChEBI" id="CHEBI:57483"/>
        <dbReference type="ChEBI" id="CHEBI:60203"/>
        <dbReference type="ChEBI" id="CHEBI:60204"/>
        <dbReference type="EC" id="5.3.1.28"/>
    </reaction>
</comment>
<comment type="cofactor">
    <cofactor evidence="1">
        <name>Zn(2+)</name>
        <dbReference type="ChEBI" id="CHEBI:29105"/>
    </cofactor>
    <text evidence="1">Binds 1 zinc ion per subunit.</text>
</comment>
<comment type="pathway">
    <text evidence="1">Carbohydrate biosynthesis; D-glycero-D-manno-heptose 7-phosphate biosynthesis; D-glycero-alpha-D-manno-heptose 7-phosphate and D-glycero-beta-D-manno-heptose 7-phosphate from sedoheptulose 7-phosphate: step 1/1.</text>
</comment>
<comment type="subunit">
    <text evidence="1">Homotetramer.</text>
</comment>
<comment type="subcellular location">
    <subcellularLocation>
        <location evidence="1">Cytoplasm</location>
    </subcellularLocation>
</comment>
<comment type="miscellaneous">
    <text evidence="1">The reaction produces a racemic mixture of D-glycero-alpha-D-manno-heptose 7-phosphate and D-glycero-beta-D-manno-heptose 7-phosphate.</text>
</comment>
<comment type="similarity">
    <text evidence="1">Belongs to the SIS family. GmhA subfamily.</text>
</comment>
<protein>
    <recommendedName>
        <fullName evidence="1">Phosphoheptose isomerase</fullName>
        <ecNumber evidence="1">5.3.1.28</ecNumber>
    </recommendedName>
    <alternativeName>
        <fullName evidence="1">Sedoheptulose 7-phosphate isomerase</fullName>
    </alternativeName>
</protein>
<feature type="chain" id="PRO_1000197010" description="Phosphoheptose isomerase">
    <location>
        <begin position="1"/>
        <end position="197"/>
    </location>
</feature>
<feature type="domain" description="SIS" evidence="1">
    <location>
        <begin position="34"/>
        <end position="192"/>
    </location>
</feature>
<feature type="binding site" evidence="1">
    <location>
        <begin position="49"/>
        <end position="51"/>
    </location>
    <ligand>
        <name>substrate</name>
    </ligand>
</feature>
<feature type="binding site" evidence="1">
    <location>
        <position position="62"/>
    </location>
    <ligand>
        <name>substrate</name>
    </ligand>
</feature>
<feature type="binding site" evidence="1">
    <location>
        <position position="62"/>
    </location>
    <ligand>
        <name>Zn(2+)</name>
        <dbReference type="ChEBI" id="CHEBI:29105"/>
    </ligand>
</feature>
<feature type="binding site" evidence="1">
    <location>
        <begin position="91"/>
        <end position="92"/>
    </location>
    <ligand>
        <name>substrate</name>
    </ligand>
</feature>
<feature type="binding site" evidence="1">
    <location>
        <position position="122"/>
    </location>
    <ligand>
        <name>substrate</name>
    </ligand>
</feature>
<feature type="binding site" evidence="1">
    <location>
        <position position="172"/>
    </location>
    <ligand>
        <name>substrate</name>
    </ligand>
</feature>
<feature type="binding site" evidence="1">
    <location>
        <position position="172"/>
    </location>
    <ligand>
        <name>Zn(2+)</name>
        <dbReference type="ChEBI" id="CHEBI:29105"/>
    </ligand>
</feature>
<feature type="binding site" evidence="1">
    <location>
        <position position="180"/>
    </location>
    <ligand>
        <name>Zn(2+)</name>
        <dbReference type="ChEBI" id="CHEBI:29105"/>
    </ligand>
</feature>
<reference key="1">
    <citation type="submission" date="2006-06" db="EMBL/GenBank/DDBJ databases">
        <title>Complete sequence of Pseudoalteromonas atlantica T6c.</title>
        <authorList>
            <consortium name="US DOE Joint Genome Institute"/>
            <person name="Copeland A."/>
            <person name="Lucas S."/>
            <person name="Lapidus A."/>
            <person name="Barry K."/>
            <person name="Detter J.C."/>
            <person name="Glavina del Rio T."/>
            <person name="Hammon N."/>
            <person name="Israni S."/>
            <person name="Dalin E."/>
            <person name="Tice H."/>
            <person name="Pitluck S."/>
            <person name="Saunders E."/>
            <person name="Brettin T."/>
            <person name="Bruce D."/>
            <person name="Han C."/>
            <person name="Tapia R."/>
            <person name="Gilna P."/>
            <person name="Schmutz J."/>
            <person name="Larimer F."/>
            <person name="Land M."/>
            <person name="Hauser L."/>
            <person name="Kyrpides N."/>
            <person name="Kim E."/>
            <person name="Karls A.C."/>
            <person name="Bartlett D."/>
            <person name="Higgins B.P."/>
            <person name="Richardson P."/>
        </authorList>
    </citation>
    <scope>NUCLEOTIDE SEQUENCE [LARGE SCALE GENOMIC DNA]</scope>
    <source>
        <strain>T6c / ATCC BAA-1087</strain>
    </source>
</reference>
<proteinExistence type="inferred from homology"/>
<keyword id="KW-0119">Carbohydrate metabolism</keyword>
<keyword id="KW-0963">Cytoplasm</keyword>
<keyword id="KW-0413">Isomerase</keyword>
<keyword id="KW-0479">Metal-binding</keyword>
<keyword id="KW-0862">Zinc</keyword>
<dbReference type="EC" id="5.3.1.28" evidence="1"/>
<dbReference type="EMBL" id="CP000388">
    <property type="protein sequence ID" value="ABG42197.1"/>
    <property type="molecule type" value="Genomic_DNA"/>
</dbReference>
<dbReference type="RefSeq" id="WP_011576419.1">
    <property type="nucleotide sequence ID" value="NC_008228.1"/>
</dbReference>
<dbReference type="SMR" id="Q15PJ1"/>
<dbReference type="STRING" id="342610.Patl_3695"/>
<dbReference type="KEGG" id="pat:Patl_3695"/>
<dbReference type="eggNOG" id="COG0279">
    <property type="taxonomic scope" value="Bacteria"/>
</dbReference>
<dbReference type="HOGENOM" id="CLU_080999_3_1_6"/>
<dbReference type="OrthoDB" id="9810929at2"/>
<dbReference type="UniPathway" id="UPA00041">
    <property type="reaction ID" value="UER00436"/>
</dbReference>
<dbReference type="Proteomes" id="UP000001981">
    <property type="component" value="Chromosome"/>
</dbReference>
<dbReference type="GO" id="GO:0005737">
    <property type="term" value="C:cytoplasm"/>
    <property type="evidence" value="ECO:0007669"/>
    <property type="project" value="UniProtKB-SubCell"/>
</dbReference>
<dbReference type="GO" id="GO:0097367">
    <property type="term" value="F:carbohydrate derivative binding"/>
    <property type="evidence" value="ECO:0007669"/>
    <property type="project" value="InterPro"/>
</dbReference>
<dbReference type="GO" id="GO:0008968">
    <property type="term" value="F:D-sedoheptulose 7-phosphate isomerase activity"/>
    <property type="evidence" value="ECO:0007669"/>
    <property type="project" value="UniProtKB-UniRule"/>
</dbReference>
<dbReference type="GO" id="GO:0008270">
    <property type="term" value="F:zinc ion binding"/>
    <property type="evidence" value="ECO:0007669"/>
    <property type="project" value="UniProtKB-UniRule"/>
</dbReference>
<dbReference type="GO" id="GO:0005975">
    <property type="term" value="P:carbohydrate metabolic process"/>
    <property type="evidence" value="ECO:0007669"/>
    <property type="project" value="UniProtKB-UniRule"/>
</dbReference>
<dbReference type="GO" id="GO:2001061">
    <property type="term" value="P:D-glycero-D-manno-heptose 7-phosphate biosynthetic process"/>
    <property type="evidence" value="ECO:0007669"/>
    <property type="project" value="UniProtKB-UniPathway"/>
</dbReference>
<dbReference type="CDD" id="cd05006">
    <property type="entry name" value="SIS_GmhA"/>
    <property type="match status" value="1"/>
</dbReference>
<dbReference type="Gene3D" id="3.40.50.10490">
    <property type="entry name" value="Glucose-6-phosphate isomerase like protein, domain 1"/>
    <property type="match status" value="1"/>
</dbReference>
<dbReference type="HAMAP" id="MF_00067">
    <property type="entry name" value="GmhA"/>
    <property type="match status" value="1"/>
</dbReference>
<dbReference type="InterPro" id="IPR035461">
    <property type="entry name" value="GmhA/DiaA"/>
</dbReference>
<dbReference type="InterPro" id="IPR004515">
    <property type="entry name" value="Phosphoheptose_Isoase"/>
</dbReference>
<dbReference type="InterPro" id="IPR001347">
    <property type="entry name" value="SIS_dom"/>
</dbReference>
<dbReference type="InterPro" id="IPR046348">
    <property type="entry name" value="SIS_dom_sf"/>
</dbReference>
<dbReference type="InterPro" id="IPR050099">
    <property type="entry name" value="SIS_GmhA/DiaA_subfam"/>
</dbReference>
<dbReference type="NCBIfam" id="NF010546">
    <property type="entry name" value="PRK13936.1"/>
    <property type="match status" value="1"/>
</dbReference>
<dbReference type="PANTHER" id="PTHR30390:SF6">
    <property type="entry name" value="DNAA INITIATOR-ASSOCIATING PROTEIN DIAA"/>
    <property type="match status" value="1"/>
</dbReference>
<dbReference type="PANTHER" id="PTHR30390">
    <property type="entry name" value="SEDOHEPTULOSE 7-PHOSPHATE ISOMERASE / DNAA INITIATOR-ASSOCIATING FACTOR FOR REPLICATION INITIATION"/>
    <property type="match status" value="1"/>
</dbReference>
<dbReference type="Pfam" id="PF13580">
    <property type="entry name" value="SIS_2"/>
    <property type="match status" value="1"/>
</dbReference>
<dbReference type="SUPFAM" id="SSF53697">
    <property type="entry name" value="SIS domain"/>
    <property type="match status" value="1"/>
</dbReference>
<dbReference type="PROSITE" id="PS51464">
    <property type="entry name" value="SIS"/>
    <property type="match status" value="1"/>
</dbReference>
<sequence length="197" mass="21038">MLESVKANFTESIQTMIASLEELPEPIALATQMMVNALINGNKILSCGNGGSAAHAQSFASQMLNRYERERPSLPAIALSTDTSTMTSIANDYSYDEVFSKQVRALGQTGDILLAISPNGASRSVISAMEAALSRDMTIVALTGLDGGEMAGLLGPNDVEIRVPSSRAVRIHEVHLLVIHNLCEGVDDCLFPETSQE</sequence>
<evidence type="ECO:0000255" key="1">
    <source>
        <dbReference type="HAMAP-Rule" id="MF_00067"/>
    </source>
</evidence>
<accession>Q15PJ1</accession>
<name>GMHA_PSEA6</name>